<evidence type="ECO:0000250" key="1">
    <source>
        <dbReference type="UniProtKB" id="P9WHV5"/>
    </source>
</evidence>
<evidence type="ECO:0000256" key="2">
    <source>
        <dbReference type="SAM" id="MobiDB-lite"/>
    </source>
</evidence>
<evidence type="ECO:0000269" key="3">
    <source>
    </source>
</evidence>
<evidence type="ECO:0000303" key="4">
    <source>
    </source>
</evidence>
<evidence type="ECO:0000305" key="5"/>
<protein>
    <recommendedName>
        <fullName evidence="4">Exopolyphosphatase 1</fullName>
        <shortName evidence="5">ExopolyPase 1</shortName>
        <ecNumber evidence="3">3.6.1.11</ecNumber>
    </recommendedName>
</protein>
<name>PPX1_MYCTO</name>
<proteinExistence type="evidence at protein level"/>
<accession>P9WHV4</accession>
<accession>L0T3X7</accession>
<accession>P65786</accession>
<accession>Q11161</accession>
<gene>
    <name evidence="4" type="primary">ppx</name>
    <name type="ordered locus">MT0516</name>
</gene>
<organism>
    <name type="scientific">Mycobacterium tuberculosis (strain CDC 1551 / Oshkosh)</name>
    <dbReference type="NCBI Taxonomy" id="83331"/>
    <lineage>
        <taxon>Bacteria</taxon>
        <taxon>Bacillati</taxon>
        <taxon>Actinomycetota</taxon>
        <taxon>Actinomycetes</taxon>
        <taxon>Mycobacteriales</taxon>
        <taxon>Mycobacteriaceae</taxon>
        <taxon>Mycobacterium</taxon>
        <taxon>Mycobacterium tuberculosis complex</taxon>
    </lineage>
</organism>
<keyword id="KW-0378">Hydrolase</keyword>
<keyword id="KW-1185">Reference proteome</keyword>
<comment type="function">
    <text evidence="3">Degradation of inorganic polyphosphates (polyP). Releases orthophosphate processively from the ends of the polyP chain. Required for long-term survival of M.tuberculosis in necrotic lung lesions.</text>
</comment>
<comment type="catalytic activity">
    <reaction evidence="3">
        <text>[phosphate](n) + H2O = [phosphate](n-1) + phosphate + H(+)</text>
        <dbReference type="Rhea" id="RHEA:21528"/>
        <dbReference type="Rhea" id="RHEA-COMP:9859"/>
        <dbReference type="Rhea" id="RHEA-COMP:14279"/>
        <dbReference type="ChEBI" id="CHEBI:15377"/>
        <dbReference type="ChEBI" id="CHEBI:15378"/>
        <dbReference type="ChEBI" id="CHEBI:16838"/>
        <dbReference type="ChEBI" id="CHEBI:43474"/>
        <dbReference type="EC" id="3.6.1.11"/>
    </reaction>
</comment>
<comment type="subunit">
    <text evidence="1">Homodimer.</text>
</comment>
<comment type="disruption phenotype">
    <text evidence="3">Mutant exhibits elevated intracellular levels of polyP and increased expression of mprB, sigE and rel. Deficiency results in decelerated growth during logarithmic-phase in axenic cultures, tolerance to the cell wall-active drug isoniazid, a significant survival defect in activated human macrophages and reduced persistence in the lungs of guinea pigs.</text>
</comment>
<comment type="similarity">
    <text evidence="5">Belongs to the GppA/Ppx family.</text>
</comment>
<sequence length="344" mass="36550">MRLGVLDVGSNTVHLLVVDAHRGGHPTPMSSTKATLRLAEATDSSGKITKRGADKLISTIDEFAKIAISSGCAELMAFATSAVRDAENSEDVLSRVRKETGVELQALRGEDESRLTFLAVRRWYGWSAGRILNLDIGGGSLEVSSGVDEEPEIALSLPLGAGRLTREWLPDDPPGRRRVAMLRDWLDAELAEPSVTVLEAGSPDLAVATSKTFRSLARLTGAAPSMAGPRVKRTLTANGLRQLIAFISRMTAVDRAELEGVSADRAPQIVAGALVAEASMRALSIEAVEICPWALREGLILRKLDSEADGTALIESSSVHTSVRAVGGQPADRNAANRSRGSKP</sequence>
<feature type="chain" id="PRO_0000428116" description="Exopolyphosphatase 1">
    <location>
        <begin position="1"/>
        <end position="344"/>
    </location>
</feature>
<feature type="region of interest" description="Disordered" evidence="2">
    <location>
        <begin position="319"/>
        <end position="344"/>
    </location>
</feature>
<dbReference type="EC" id="3.6.1.11" evidence="3"/>
<dbReference type="EMBL" id="AE000516">
    <property type="protein sequence ID" value="AAK44739.1"/>
    <property type="molecule type" value="Genomic_DNA"/>
</dbReference>
<dbReference type="PIR" id="C70745">
    <property type="entry name" value="C70745"/>
</dbReference>
<dbReference type="SMR" id="P9WHV4"/>
<dbReference type="KEGG" id="mtc:MT0516"/>
<dbReference type="HOGENOM" id="CLU_025908_1_4_11"/>
<dbReference type="BRENDA" id="3.6.1.11">
    <property type="organism ID" value="3445"/>
</dbReference>
<dbReference type="Proteomes" id="UP000001020">
    <property type="component" value="Chromosome"/>
</dbReference>
<dbReference type="GO" id="GO:0004309">
    <property type="term" value="F:exopolyphosphatase activity"/>
    <property type="evidence" value="ECO:0007669"/>
    <property type="project" value="UniProtKB-EC"/>
</dbReference>
<dbReference type="CDD" id="cd24056">
    <property type="entry name" value="ASKHA_NBD_MtPPX1-like"/>
    <property type="match status" value="1"/>
</dbReference>
<dbReference type="FunFam" id="3.30.420.40:FF:000138">
    <property type="entry name" value="Exopolyphosphatase 1"/>
    <property type="match status" value="1"/>
</dbReference>
<dbReference type="FunFam" id="3.30.420.150:FF:000006">
    <property type="entry name" value="Ppx/GppA family phosphatase"/>
    <property type="match status" value="1"/>
</dbReference>
<dbReference type="Gene3D" id="3.30.420.40">
    <property type="match status" value="1"/>
</dbReference>
<dbReference type="Gene3D" id="3.30.420.150">
    <property type="entry name" value="Exopolyphosphatase. Domain 2"/>
    <property type="match status" value="1"/>
</dbReference>
<dbReference type="InterPro" id="IPR043129">
    <property type="entry name" value="ATPase_NBD"/>
</dbReference>
<dbReference type="InterPro" id="IPR050273">
    <property type="entry name" value="GppA/Ppx_hydrolase"/>
</dbReference>
<dbReference type="InterPro" id="IPR003695">
    <property type="entry name" value="Ppx_GppA_N"/>
</dbReference>
<dbReference type="PANTHER" id="PTHR30005">
    <property type="entry name" value="EXOPOLYPHOSPHATASE"/>
    <property type="match status" value="1"/>
</dbReference>
<dbReference type="PANTHER" id="PTHR30005:SF0">
    <property type="entry name" value="RETROGRADE REGULATION PROTEIN 2"/>
    <property type="match status" value="1"/>
</dbReference>
<dbReference type="Pfam" id="PF02541">
    <property type="entry name" value="Ppx-GppA"/>
    <property type="match status" value="1"/>
</dbReference>
<dbReference type="SUPFAM" id="SSF53067">
    <property type="entry name" value="Actin-like ATPase domain"/>
    <property type="match status" value="2"/>
</dbReference>
<reference key="1">
    <citation type="journal article" date="2002" name="J. Bacteriol.">
        <title>Whole-genome comparison of Mycobacterium tuberculosis clinical and laboratory strains.</title>
        <authorList>
            <person name="Fleischmann R.D."/>
            <person name="Alland D."/>
            <person name="Eisen J.A."/>
            <person name="Carpenter L."/>
            <person name="White O."/>
            <person name="Peterson J.D."/>
            <person name="DeBoy R.T."/>
            <person name="Dodson R.J."/>
            <person name="Gwinn M.L."/>
            <person name="Haft D.H."/>
            <person name="Hickey E.K."/>
            <person name="Kolonay J.F."/>
            <person name="Nelson W.C."/>
            <person name="Umayam L.A."/>
            <person name="Ermolaeva M.D."/>
            <person name="Salzberg S.L."/>
            <person name="Delcher A."/>
            <person name="Utterback T.R."/>
            <person name="Weidman J.F."/>
            <person name="Khouri H.M."/>
            <person name="Gill J."/>
            <person name="Mikula A."/>
            <person name="Bishai W."/>
            <person name="Jacobs W.R. Jr."/>
            <person name="Venter J.C."/>
            <person name="Fraser C.M."/>
        </authorList>
    </citation>
    <scope>NUCLEOTIDE SEQUENCE [LARGE SCALE GENOMIC DNA]</scope>
    <source>
        <strain>CDC 1551 / Oshkosh</strain>
    </source>
</reference>
<reference key="2">
    <citation type="journal article" date="2011" name="PLoS ONE">
        <title>The role of the novel exopolyphosphatase MT0516 in Mycobacterium tuberculosis drug tolerance and persistence.</title>
        <authorList>
            <person name="Thayil S.M."/>
            <person name="Morrison N."/>
            <person name="Schechter N."/>
            <person name="Rubin H."/>
            <person name="Karakousis P.C."/>
        </authorList>
    </citation>
    <scope>FUNCTION</scope>
    <scope>CATALYTIC ACTIVITY</scope>
    <scope>DISRUPTION PHENOTYPE</scope>
    <source>
        <strain>CDC 1551 / Oshkosh</strain>
    </source>
</reference>